<reference key="1">
    <citation type="journal article" date="1995" name="Plant Mol. Biol. Rep.">
        <title>The chloroplast genome of a chlorophyll a+c-containing alga, Odontella sinensis.</title>
        <authorList>
            <person name="Kowallik K.V."/>
            <person name="Stoebe B."/>
            <person name="Schaffran I."/>
            <person name="Kroth-Pancic P."/>
            <person name="Freier U."/>
        </authorList>
    </citation>
    <scope>NUCLEOTIDE SEQUENCE [LARGE SCALE GENOMIC DNA]</scope>
</reference>
<evidence type="ECO:0000250" key="1"/>
<evidence type="ECO:0000305" key="2"/>
<dbReference type="EMBL" id="Z67753">
    <property type="protein sequence ID" value="CAA91645.1"/>
    <property type="molecule type" value="Genomic_DNA"/>
</dbReference>
<dbReference type="PIR" id="S78272">
    <property type="entry name" value="S78272"/>
</dbReference>
<dbReference type="RefSeq" id="NP_043613.1">
    <property type="nucleotide sequence ID" value="NC_001713.1"/>
</dbReference>
<dbReference type="SMR" id="P49506"/>
<dbReference type="GeneID" id="801789"/>
<dbReference type="GO" id="GO:0009507">
    <property type="term" value="C:chloroplast"/>
    <property type="evidence" value="ECO:0007669"/>
    <property type="project" value="UniProtKB-SubCell"/>
</dbReference>
<dbReference type="GO" id="GO:0005763">
    <property type="term" value="C:mitochondrial small ribosomal subunit"/>
    <property type="evidence" value="ECO:0007669"/>
    <property type="project" value="TreeGrafter"/>
</dbReference>
<dbReference type="GO" id="GO:0019843">
    <property type="term" value="F:rRNA binding"/>
    <property type="evidence" value="ECO:0007669"/>
    <property type="project" value="UniProtKB-UniRule"/>
</dbReference>
<dbReference type="GO" id="GO:0003735">
    <property type="term" value="F:structural constituent of ribosome"/>
    <property type="evidence" value="ECO:0007669"/>
    <property type="project" value="InterPro"/>
</dbReference>
<dbReference type="GO" id="GO:0000028">
    <property type="term" value="P:ribosomal small subunit assembly"/>
    <property type="evidence" value="ECO:0007669"/>
    <property type="project" value="TreeGrafter"/>
</dbReference>
<dbReference type="GO" id="GO:0006412">
    <property type="term" value="P:translation"/>
    <property type="evidence" value="ECO:0007669"/>
    <property type="project" value="UniProtKB-UniRule"/>
</dbReference>
<dbReference type="FunFam" id="3.30.860.10:FF:000001">
    <property type="entry name" value="30S ribosomal protein S19"/>
    <property type="match status" value="1"/>
</dbReference>
<dbReference type="Gene3D" id="3.30.860.10">
    <property type="entry name" value="30s Ribosomal Protein S19, Chain A"/>
    <property type="match status" value="1"/>
</dbReference>
<dbReference type="HAMAP" id="MF_00531">
    <property type="entry name" value="Ribosomal_uS19"/>
    <property type="match status" value="1"/>
</dbReference>
<dbReference type="InterPro" id="IPR002222">
    <property type="entry name" value="Ribosomal_uS19"/>
</dbReference>
<dbReference type="InterPro" id="IPR005732">
    <property type="entry name" value="Ribosomal_uS19_bac-type"/>
</dbReference>
<dbReference type="InterPro" id="IPR020934">
    <property type="entry name" value="Ribosomal_uS19_CS"/>
</dbReference>
<dbReference type="InterPro" id="IPR023575">
    <property type="entry name" value="Ribosomal_uS19_SF"/>
</dbReference>
<dbReference type="NCBIfam" id="TIGR01050">
    <property type="entry name" value="rpsS_bact"/>
    <property type="match status" value="1"/>
</dbReference>
<dbReference type="PANTHER" id="PTHR11880">
    <property type="entry name" value="RIBOSOMAL PROTEIN S19P FAMILY MEMBER"/>
    <property type="match status" value="1"/>
</dbReference>
<dbReference type="PANTHER" id="PTHR11880:SF8">
    <property type="entry name" value="SMALL RIBOSOMAL SUBUNIT PROTEIN US19M"/>
    <property type="match status" value="1"/>
</dbReference>
<dbReference type="Pfam" id="PF00203">
    <property type="entry name" value="Ribosomal_S19"/>
    <property type="match status" value="1"/>
</dbReference>
<dbReference type="PIRSF" id="PIRSF002144">
    <property type="entry name" value="Ribosomal_S19"/>
    <property type="match status" value="1"/>
</dbReference>
<dbReference type="PRINTS" id="PR00975">
    <property type="entry name" value="RIBOSOMALS19"/>
</dbReference>
<dbReference type="SUPFAM" id="SSF54570">
    <property type="entry name" value="Ribosomal protein S19"/>
    <property type="match status" value="1"/>
</dbReference>
<dbReference type="PROSITE" id="PS00323">
    <property type="entry name" value="RIBOSOMAL_S19"/>
    <property type="match status" value="1"/>
</dbReference>
<sequence>MPRSLKKGPFVAYHLLKKIDKMNASGKKDVITTWSRTSTILPTMVGHTIAVYNGRQHVPIFISDQLVGHKLGEFVSTRTFKSHIKTDKKTKR</sequence>
<comment type="function">
    <text evidence="1">Protein S19 forms a complex with S13 that binds strongly to the 16S ribosomal RNA.</text>
</comment>
<comment type="subcellular location">
    <subcellularLocation>
        <location>Plastid</location>
        <location>Chloroplast</location>
    </subcellularLocation>
</comment>
<comment type="similarity">
    <text evidence="2">Belongs to the universal ribosomal protein uS19 family.</text>
</comment>
<feature type="chain" id="PRO_0000129974" description="Small ribosomal subunit protein uS19c">
    <location>
        <begin position="1"/>
        <end position="92"/>
    </location>
</feature>
<protein>
    <recommendedName>
        <fullName evidence="2">Small ribosomal subunit protein uS19c</fullName>
    </recommendedName>
    <alternativeName>
        <fullName>30S ribosomal protein S19, chloroplastic</fullName>
    </alternativeName>
</protein>
<accession>P49506</accession>
<proteinExistence type="inferred from homology"/>
<geneLocation type="chloroplast"/>
<organism>
    <name type="scientific">Trieres chinensis</name>
    <name type="common">Marine centric diatom</name>
    <name type="synonym">Odontella sinensis</name>
    <dbReference type="NCBI Taxonomy" id="1514140"/>
    <lineage>
        <taxon>Eukaryota</taxon>
        <taxon>Sar</taxon>
        <taxon>Stramenopiles</taxon>
        <taxon>Ochrophyta</taxon>
        <taxon>Bacillariophyta</taxon>
        <taxon>Mediophyceae</taxon>
        <taxon>Biddulphiophycidae</taxon>
        <taxon>Eupodiscales</taxon>
        <taxon>Parodontellaceae</taxon>
        <taxon>Trieres</taxon>
    </lineage>
</organism>
<name>RR19_TRICV</name>
<gene>
    <name type="primary">rps19</name>
</gene>
<keyword id="KW-0150">Chloroplast</keyword>
<keyword id="KW-0934">Plastid</keyword>
<keyword id="KW-0687">Ribonucleoprotein</keyword>
<keyword id="KW-0689">Ribosomal protein</keyword>
<keyword id="KW-0694">RNA-binding</keyword>
<keyword id="KW-0699">rRNA-binding</keyword>